<protein>
    <recommendedName>
        <fullName>Tubulin-specific chaperone A</fullName>
    </recommendedName>
    <alternativeName>
        <fullName>TCP1-chaperonin cofactor A</fullName>
    </alternativeName>
    <alternativeName>
        <fullName>Tubulin-folding cofactor A</fullName>
        <shortName>CFA</shortName>
    </alternativeName>
</protein>
<evidence type="ECO:0000269" key="1">
    <source>
    </source>
</evidence>
<evidence type="ECO:0000305" key="2"/>
<keyword id="KW-0007">Acetylation</keyword>
<keyword id="KW-0143">Chaperone</keyword>
<keyword id="KW-0963">Cytoplasm</keyword>
<keyword id="KW-0206">Cytoskeleton</keyword>
<keyword id="KW-0903">Direct protein sequencing</keyword>
<keyword id="KW-0493">Microtubule</keyword>
<keyword id="KW-1185">Reference proteome</keyword>
<sequence>MADPRLRQIKIKTGVVKRLAKEKVMYEKEAKQQEEKIEKMKAEACDDYGIKKQAEILQESRMMIPDCQRRLEIAHADLTQLLENEKELEEAEEYKEARSILESVKLEA</sequence>
<proteinExistence type="evidence at protein level"/>
<dbReference type="SMR" id="P80585"/>
<dbReference type="FunCoup" id="P80585">
    <property type="interactions" value="1769"/>
</dbReference>
<dbReference type="STRING" id="9031.ENSGALP00000072211"/>
<dbReference type="iPTMnet" id="P80585"/>
<dbReference type="PaxDb" id="9031-ENSGALP00000006933"/>
<dbReference type="VEuPathDB" id="HostDB:geneid_416367"/>
<dbReference type="eggNOG" id="KOG3470">
    <property type="taxonomic scope" value="Eukaryota"/>
</dbReference>
<dbReference type="InParanoid" id="P80585"/>
<dbReference type="OrthoDB" id="296187at2759"/>
<dbReference type="PhylomeDB" id="P80585"/>
<dbReference type="Proteomes" id="UP000000539">
    <property type="component" value="Unassembled WGS sequence"/>
</dbReference>
<dbReference type="GO" id="GO:0005737">
    <property type="term" value="C:cytoplasm"/>
    <property type="evidence" value="ECO:0007669"/>
    <property type="project" value="UniProtKB-KW"/>
</dbReference>
<dbReference type="GO" id="GO:0005874">
    <property type="term" value="C:microtubule"/>
    <property type="evidence" value="ECO:0007669"/>
    <property type="project" value="UniProtKB-KW"/>
</dbReference>
<dbReference type="GO" id="GO:0015630">
    <property type="term" value="C:microtubule cytoskeleton"/>
    <property type="evidence" value="ECO:0000318"/>
    <property type="project" value="GO_Central"/>
</dbReference>
<dbReference type="GO" id="GO:0048487">
    <property type="term" value="F:beta-tubulin binding"/>
    <property type="evidence" value="ECO:0007669"/>
    <property type="project" value="InterPro"/>
</dbReference>
<dbReference type="GO" id="GO:0015631">
    <property type="term" value="F:tubulin binding"/>
    <property type="evidence" value="ECO:0000318"/>
    <property type="project" value="GO_Central"/>
</dbReference>
<dbReference type="GO" id="GO:0007023">
    <property type="term" value="P:post-chaperonin tubulin folding pathway"/>
    <property type="evidence" value="ECO:0007669"/>
    <property type="project" value="InterPro"/>
</dbReference>
<dbReference type="GO" id="GO:0006457">
    <property type="term" value="P:protein folding"/>
    <property type="evidence" value="ECO:0000318"/>
    <property type="project" value="GO_Central"/>
</dbReference>
<dbReference type="GO" id="GO:0007021">
    <property type="term" value="P:tubulin complex assembly"/>
    <property type="evidence" value="ECO:0000318"/>
    <property type="project" value="GO_Central"/>
</dbReference>
<dbReference type="FunFam" id="1.20.58.90:FF:000008">
    <property type="entry name" value="Tubulin-specific chaperone A"/>
    <property type="match status" value="1"/>
</dbReference>
<dbReference type="Gene3D" id="1.20.58.90">
    <property type="match status" value="1"/>
</dbReference>
<dbReference type="InterPro" id="IPR004226">
    <property type="entry name" value="TBCA"/>
</dbReference>
<dbReference type="InterPro" id="IPR036126">
    <property type="entry name" value="TBCA_sf"/>
</dbReference>
<dbReference type="PANTHER" id="PTHR21500">
    <property type="entry name" value="TUBULIN-SPECIFIC CHAPERONE A"/>
    <property type="match status" value="1"/>
</dbReference>
<dbReference type="PANTHER" id="PTHR21500:SF0">
    <property type="entry name" value="TUBULIN-SPECIFIC CHAPERONE A"/>
    <property type="match status" value="1"/>
</dbReference>
<dbReference type="Pfam" id="PF02970">
    <property type="entry name" value="TBCA"/>
    <property type="match status" value="1"/>
</dbReference>
<dbReference type="SUPFAM" id="SSF46988">
    <property type="entry name" value="Tubulin chaperone cofactor A"/>
    <property type="match status" value="1"/>
</dbReference>
<gene>
    <name type="primary">TBCA</name>
</gene>
<name>TBCA_CHICK</name>
<accession>P80585</accession>
<reference key="1">
    <citation type="journal article" date="1996" name="Biochemistry">
        <title>Cofactor A is a molecular chaperone required for beta-tubulin folding: functional and structural characterization.</title>
        <authorList>
            <person name="Melki R."/>
            <person name="Rommelaere H."/>
            <person name="Leguy R."/>
            <person name="Vandekerckhove J."/>
            <person name="Ampe C."/>
        </authorList>
    </citation>
    <scope>PROTEIN SEQUENCE OF 2-108</scope>
    <scope>ACETYLATION AT ALA-2</scope>
    <source>
        <tissue>Reticulocyte</tissue>
    </source>
</reference>
<comment type="function">
    <text>Tubulin-folding protein; involved in the early step of the tubulin folding pathway.</text>
</comment>
<comment type="subunit">
    <text>Supercomplex made of cofactors A to E. Cofactors A and D function by capturing and stabilizing tubulin in a quasi-native conformation. Cofactor E binds to the cofactor D-tubulin complex; interaction with cofactor C then causes the release of tubulin polypeptides that are committed to the native state.</text>
</comment>
<comment type="subcellular location">
    <subcellularLocation>
        <location>Cytoplasm</location>
        <location>Cytoskeleton</location>
    </subcellularLocation>
</comment>
<comment type="similarity">
    <text evidence="2">Belongs to the TBCA family.</text>
</comment>
<organism>
    <name type="scientific">Gallus gallus</name>
    <name type="common">Chicken</name>
    <dbReference type="NCBI Taxonomy" id="9031"/>
    <lineage>
        <taxon>Eukaryota</taxon>
        <taxon>Metazoa</taxon>
        <taxon>Chordata</taxon>
        <taxon>Craniata</taxon>
        <taxon>Vertebrata</taxon>
        <taxon>Euteleostomi</taxon>
        <taxon>Archelosauria</taxon>
        <taxon>Archosauria</taxon>
        <taxon>Dinosauria</taxon>
        <taxon>Saurischia</taxon>
        <taxon>Theropoda</taxon>
        <taxon>Coelurosauria</taxon>
        <taxon>Aves</taxon>
        <taxon>Neognathae</taxon>
        <taxon>Galloanserae</taxon>
        <taxon>Galliformes</taxon>
        <taxon>Phasianidae</taxon>
        <taxon>Phasianinae</taxon>
        <taxon>Gallus</taxon>
    </lineage>
</organism>
<feature type="initiator methionine" description="Removed" evidence="1">
    <location>
        <position position="1"/>
    </location>
</feature>
<feature type="chain" id="PRO_0000080042" description="Tubulin-specific chaperone A">
    <location>
        <begin position="2"/>
        <end position="108"/>
    </location>
</feature>
<feature type="modified residue" description="N-acetylalanine" evidence="1">
    <location>
        <position position="2"/>
    </location>
</feature>